<proteinExistence type="inferred from homology"/>
<organism>
    <name type="scientific">Arabidopsis thaliana</name>
    <name type="common">Mouse-ear cress</name>
    <dbReference type="NCBI Taxonomy" id="3702"/>
    <lineage>
        <taxon>Eukaryota</taxon>
        <taxon>Viridiplantae</taxon>
        <taxon>Streptophyta</taxon>
        <taxon>Embryophyta</taxon>
        <taxon>Tracheophyta</taxon>
        <taxon>Spermatophyta</taxon>
        <taxon>Magnoliopsida</taxon>
        <taxon>eudicotyledons</taxon>
        <taxon>Gunneridae</taxon>
        <taxon>Pentapetalae</taxon>
        <taxon>rosids</taxon>
        <taxon>malvids</taxon>
        <taxon>Brassicales</taxon>
        <taxon>Brassicaceae</taxon>
        <taxon>Camelineae</taxon>
        <taxon>Arabidopsis</taxon>
    </lineage>
</organism>
<accession>O81025</accession>
<evidence type="ECO:0000250" key="1">
    <source>
        <dbReference type="UniProtKB" id="Q8NHV1"/>
    </source>
</evidence>
<evidence type="ECO:0000255" key="2"/>
<evidence type="ECO:0000255" key="3">
    <source>
        <dbReference type="PROSITE-ProRule" id="PRU01057"/>
    </source>
</evidence>
<evidence type="ECO:0000303" key="4">
    <source>
    </source>
</evidence>
<evidence type="ECO:0000303" key="5">
    <source>
    </source>
</evidence>
<evidence type="ECO:0000305" key="6"/>
<evidence type="ECO:0000305" key="7">
    <source>
    </source>
</evidence>
<evidence type="ECO:0000312" key="8">
    <source>
        <dbReference type="Araport" id="AT2G26820"/>
    </source>
</evidence>
<evidence type="ECO:0000312" key="9">
    <source>
        <dbReference type="EMBL" id="AAC32243.1"/>
    </source>
</evidence>
<gene>
    <name evidence="5" type="primary">IAN10</name>
    <name evidence="4" type="synonym">PP2A3</name>
    <name evidence="8" type="ordered locus">At2g26820</name>
    <name evidence="9" type="ORF">F12C20.14</name>
</gene>
<protein>
    <recommendedName>
        <fullName evidence="5">Immune-associated nucleotide-binding protein 10</fullName>
        <shortName evidence="5">AtIAN10</shortName>
    </recommendedName>
    <alternativeName>
        <fullName evidence="6">AIG1-like protein</fullName>
    </alternativeName>
    <alternativeName>
        <fullName evidence="4">Putative protein PHLOEM PROTEIN 2-LIKE A3</fullName>
        <shortName evidence="4">AtPP2-A3</shortName>
    </alternativeName>
</protein>
<keyword id="KW-0175">Coiled coil</keyword>
<keyword id="KW-0342">GTP-binding</keyword>
<keyword id="KW-0547">Nucleotide-binding</keyword>
<keyword id="KW-1185">Reference proteome</keyword>
<reference key="1">
    <citation type="journal article" date="1999" name="Nature">
        <title>Sequence and analysis of chromosome 2 of the plant Arabidopsis thaliana.</title>
        <authorList>
            <person name="Lin X."/>
            <person name="Kaul S."/>
            <person name="Rounsley S.D."/>
            <person name="Shea T.P."/>
            <person name="Benito M.-I."/>
            <person name="Town C.D."/>
            <person name="Fujii C.Y."/>
            <person name="Mason T.M."/>
            <person name="Bowman C.L."/>
            <person name="Barnstead M.E."/>
            <person name="Feldblyum T.V."/>
            <person name="Buell C.R."/>
            <person name="Ketchum K.A."/>
            <person name="Lee J.J."/>
            <person name="Ronning C.M."/>
            <person name="Koo H.L."/>
            <person name="Moffat K.S."/>
            <person name="Cronin L.A."/>
            <person name="Shen M."/>
            <person name="Pai G."/>
            <person name="Van Aken S."/>
            <person name="Umayam L."/>
            <person name="Tallon L.J."/>
            <person name="Gill J.E."/>
            <person name="Adams M.D."/>
            <person name="Carrera A.J."/>
            <person name="Creasy T.H."/>
            <person name="Goodman H.M."/>
            <person name="Somerville C.R."/>
            <person name="Copenhaver G.P."/>
            <person name="Preuss D."/>
            <person name="Nierman W.C."/>
            <person name="White O."/>
            <person name="Eisen J.A."/>
            <person name="Salzberg S.L."/>
            <person name="Fraser C.M."/>
            <person name="Venter J.C."/>
        </authorList>
    </citation>
    <scope>NUCLEOTIDE SEQUENCE [LARGE SCALE GENOMIC DNA]</scope>
    <source>
        <strain>cv. Columbia</strain>
    </source>
</reference>
<reference key="2">
    <citation type="journal article" date="2017" name="Plant J.">
        <title>Araport11: a complete reannotation of the Arabidopsis thaliana reference genome.</title>
        <authorList>
            <person name="Cheng C.Y."/>
            <person name="Krishnakumar V."/>
            <person name="Chan A.P."/>
            <person name="Thibaud-Nissen F."/>
            <person name="Schobel S."/>
            <person name="Town C.D."/>
        </authorList>
    </citation>
    <scope>GENOME REANNOTATION</scope>
    <source>
        <strain>cv. Columbia</strain>
    </source>
</reference>
<reference key="3">
    <citation type="journal article" date="2003" name="Plant Physiol.">
        <title>Diversity of the superfamily of phloem lectins (phloem protein 2) in angiosperms.</title>
        <authorList>
            <person name="Dinant S."/>
            <person name="Clark A.M."/>
            <person name="Zhu Y."/>
            <person name="Vilaine F."/>
            <person name="Palauqui J.-C."/>
            <person name="Kusiak C."/>
            <person name="Thompson G.A."/>
        </authorList>
    </citation>
    <scope>GENE FAMILY</scope>
    <scope>NOMENCLATURE</scope>
</reference>
<reference key="4">
    <citation type="journal article" date="2008" name="J. Plant Physiol.">
        <title>Computational identification and analysis of immune-associated nucleotide gene family in Arabidopsis thaliana.</title>
        <authorList>
            <person name="Liu C."/>
            <person name="Wang T."/>
            <person name="Zhang W."/>
            <person name="Li X."/>
        </authorList>
    </citation>
    <scope>GENE FAMILY</scope>
    <scope>NOMENCLATURE</scope>
</reference>
<dbReference type="EMBL" id="AC005168">
    <property type="protein sequence ID" value="AAC32243.1"/>
    <property type="molecule type" value="Genomic_DNA"/>
</dbReference>
<dbReference type="EMBL" id="CP002685">
    <property type="protein sequence ID" value="AEC07894.1"/>
    <property type="molecule type" value="Genomic_DNA"/>
</dbReference>
<dbReference type="PIR" id="T02653">
    <property type="entry name" value="T02653"/>
</dbReference>
<dbReference type="RefSeq" id="NP_180250.1">
    <property type="nucleotide sequence ID" value="NM_128239.1"/>
</dbReference>
<dbReference type="SMR" id="O81025"/>
<dbReference type="FunCoup" id="O81025">
    <property type="interactions" value="48"/>
</dbReference>
<dbReference type="STRING" id="3702.O81025"/>
<dbReference type="PaxDb" id="3702-AT2G26820.1"/>
<dbReference type="EnsemblPlants" id="AT2G26820.1">
    <property type="protein sequence ID" value="AT2G26820.1"/>
    <property type="gene ID" value="AT2G26820"/>
</dbReference>
<dbReference type="GeneID" id="817223"/>
<dbReference type="Gramene" id="AT2G26820.1">
    <property type="protein sequence ID" value="AT2G26820.1"/>
    <property type="gene ID" value="AT2G26820"/>
</dbReference>
<dbReference type="KEGG" id="ath:AT2G26820"/>
<dbReference type="Araport" id="AT2G26820"/>
<dbReference type="TAIR" id="AT2G26820">
    <property type="gene designation" value="PP2-A3"/>
</dbReference>
<dbReference type="eggNOG" id="ENOG502R7PE">
    <property type="taxonomic scope" value="Eukaryota"/>
</dbReference>
<dbReference type="HOGENOM" id="CLU_591025_0_0_1"/>
<dbReference type="InParanoid" id="O81025"/>
<dbReference type="PhylomeDB" id="O81025"/>
<dbReference type="PRO" id="PR:O81025"/>
<dbReference type="Proteomes" id="UP000006548">
    <property type="component" value="Chromosome 2"/>
</dbReference>
<dbReference type="ExpressionAtlas" id="O81025">
    <property type="expression patterns" value="baseline and differential"/>
</dbReference>
<dbReference type="GO" id="GO:0030246">
    <property type="term" value="F:carbohydrate binding"/>
    <property type="evidence" value="ECO:0000250"/>
    <property type="project" value="TAIR"/>
</dbReference>
<dbReference type="GO" id="GO:0005525">
    <property type="term" value="F:GTP binding"/>
    <property type="evidence" value="ECO:0007669"/>
    <property type="project" value="UniProtKB-KW"/>
</dbReference>
<dbReference type="CDD" id="cd01852">
    <property type="entry name" value="AIG1"/>
    <property type="match status" value="1"/>
</dbReference>
<dbReference type="FunFam" id="3.40.50.300:FF:000840">
    <property type="entry name" value="Immune-associated nucleotide-binding protein 9"/>
    <property type="match status" value="1"/>
</dbReference>
<dbReference type="Gene3D" id="3.40.50.300">
    <property type="entry name" value="P-loop containing nucleotide triphosphate hydrolases"/>
    <property type="match status" value="1"/>
</dbReference>
<dbReference type="InterPro" id="IPR006703">
    <property type="entry name" value="G_AIG1"/>
</dbReference>
<dbReference type="InterPro" id="IPR045058">
    <property type="entry name" value="GIMA/IAN/Toc"/>
</dbReference>
<dbReference type="InterPro" id="IPR027417">
    <property type="entry name" value="P-loop_NTPase"/>
</dbReference>
<dbReference type="InterPro" id="IPR025886">
    <property type="entry name" value="PP2-like"/>
</dbReference>
<dbReference type="PANTHER" id="PTHR10903:SF146">
    <property type="entry name" value="AIG1-LIKE PROTEIN_ 48352-49494-RELATED"/>
    <property type="match status" value="1"/>
</dbReference>
<dbReference type="PANTHER" id="PTHR10903">
    <property type="entry name" value="GTPASE, IMAP FAMILY MEMBER-RELATED"/>
    <property type="match status" value="1"/>
</dbReference>
<dbReference type="Pfam" id="PF04548">
    <property type="entry name" value="AIG1"/>
    <property type="match status" value="1"/>
</dbReference>
<dbReference type="Pfam" id="PF14299">
    <property type="entry name" value="PP2"/>
    <property type="match status" value="1"/>
</dbReference>
<dbReference type="SUPFAM" id="SSF52540">
    <property type="entry name" value="P-loop containing nucleoside triphosphate hydrolases"/>
    <property type="match status" value="1"/>
</dbReference>
<dbReference type="PROSITE" id="PS51720">
    <property type="entry name" value="G_AIG1"/>
    <property type="match status" value="1"/>
</dbReference>
<sequence>MSEPIKNIVLVGRTGNGKSSTGNTLLGTKQFKSKNQAKGVTMICEMYRAAIQDGPIINVIDTPGLCDSFVPGDDISNEIINCLTMAEEGIHAVLLVLSARGRISKEEESTVNTLQCIFGSQILDYCIVVFTGGDDLEEDDQTLDDYFRAGCPEFLTKVLRLCGGRKVLFDNKSKDEKKKVEQVKQLLARVENVGEQTGGIPYTYQLHRKIKEENDERLREEERVIESKNRAEAELAEMQQNLLMEKEKLQMEEAKNKQLIAQAEANEKLMEQERAKNRAETELAAVMVEKLQMEEEKNKQLIAQANRMICARDLNIEWSHSEEHWKWVNLDHNISSNTFVEVAELLGVYWFDVSGSLDTTEMAPWTHYEVLFVVNLKDSAFKWNAAVKMNLFYINSRPGGPGTQERAVDMRQHIGKGWVTIHAGEFITTPENVGLIGFRMSEVDSGDNRGGLIVKGVLIRPIN</sequence>
<name>IAN10_ARATH</name>
<feature type="chain" id="PRO_0000285278" description="Immune-associated nucleotide-binding protein 10">
    <location>
        <begin position="1"/>
        <end position="463"/>
    </location>
</feature>
<feature type="domain" description="AIG1-type G" evidence="3">
    <location>
        <begin position="3"/>
        <end position="211"/>
    </location>
</feature>
<feature type="region of interest" description="G1" evidence="3">
    <location>
        <begin position="12"/>
        <end position="19"/>
    </location>
</feature>
<feature type="region of interest" description="G2" evidence="3">
    <location>
        <begin position="39"/>
        <end position="43"/>
    </location>
</feature>
<feature type="region of interest" description="G3" evidence="3">
    <location>
        <begin position="61"/>
        <end position="64"/>
    </location>
</feature>
<feature type="region of interest" description="G4" evidence="3">
    <location>
        <begin position="131"/>
        <end position="134"/>
    </location>
</feature>
<feature type="region of interest" description="G5" evidence="3">
    <location>
        <begin position="170"/>
        <end position="172"/>
    </location>
</feature>
<feature type="coiled-coil region" evidence="2">
    <location>
        <begin position="173"/>
        <end position="308"/>
    </location>
</feature>
<feature type="binding site" evidence="1">
    <location>
        <begin position="12"/>
        <end position="20"/>
    </location>
    <ligand>
        <name>GTP</name>
        <dbReference type="ChEBI" id="CHEBI:37565"/>
    </ligand>
</feature>
<feature type="binding site" evidence="1">
    <location>
        <position position="33"/>
    </location>
    <ligand>
        <name>GTP</name>
        <dbReference type="ChEBI" id="CHEBI:37565"/>
    </ligand>
</feature>
<feature type="binding site" evidence="1">
    <location>
        <position position="171"/>
    </location>
    <ligand>
        <name>GTP</name>
        <dbReference type="ChEBI" id="CHEBI:37565"/>
    </ligand>
</feature>
<comment type="tissue specificity">
    <text evidence="7">Expressed in radicles of the germinating seeds.</text>
</comment>
<comment type="developmental stage">
    <text evidence="7">Expressed during the young seedling stage.</text>
</comment>
<comment type="induction">
    <text evidence="7">Up-regulated by brassinolides. Down-regulated by 2-aminoethoxyvinylglycine (AVG), high CO(2), isoxaben, and propiconazole treatments.</text>
</comment>
<comment type="similarity">
    <text evidence="6">Belongs to the TRAFAC class TrmE-Era-EngA-EngB-Septin-like GTPase superfamily. AIG1/Toc34/Toc159-like paraseptin GTPase family. IAN subfamily.</text>
</comment>